<accession>Q06553</accession>
<protein>
    <recommendedName>
        <fullName>HTH-type transcriptional regulator PrtR</fullName>
    </recommendedName>
    <alternativeName>
        <fullName>Pyocin repressor protein</fullName>
    </alternativeName>
</protein>
<feature type="chain" id="PRO_0000149730" description="HTH-type transcriptional regulator PrtR">
    <location>
        <begin position="1"/>
        <end position="256"/>
    </location>
</feature>
<feature type="domain" description="HTH cro/C1-type" evidence="1">
    <location>
        <begin position="16"/>
        <end position="69"/>
    </location>
</feature>
<feature type="DNA-binding region" description="H-T-H motif" evidence="1">
    <location>
        <begin position="27"/>
        <end position="46"/>
    </location>
</feature>
<evidence type="ECO:0000255" key="1">
    <source>
        <dbReference type="PROSITE-ProRule" id="PRU00257"/>
    </source>
</evidence>
<dbReference type="EMBL" id="D12706">
    <property type="protein sequence ID" value="BAA02198.1"/>
    <property type="molecule type" value="Genomic_DNA"/>
</dbReference>
<dbReference type="EMBL" id="AB030825">
    <property type="protein sequence ID" value="BAA83146.1"/>
    <property type="molecule type" value="Genomic_DNA"/>
</dbReference>
<dbReference type="EMBL" id="AB030826">
    <property type="protein sequence ID" value="BAA83132.1"/>
    <property type="molecule type" value="Genomic_DNA"/>
</dbReference>
<dbReference type="EMBL" id="AE004091">
    <property type="protein sequence ID" value="AAG04000.1"/>
    <property type="molecule type" value="Genomic_DNA"/>
</dbReference>
<dbReference type="PIR" id="A47062">
    <property type="entry name" value="A47062"/>
</dbReference>
<dbReference type="RefSeq" id="NP_249302.1">
    <property type="nucleotide sequence ID" value="NC_002516.2"/>
</dbReference>
<dbReference type="RefSeq" id="WP_003113202.1">
    <property type="nucleotide sequence ID" value="NZ_QZGE01000010.1"/>
</dbReference>
<dbReference type="STRING" id="208964.PA0611"/>
<dbReference type="PaxDb" id="208964-PA0611"/>
<dbReference type="GeneID" id="879679"/>
<dbReference type="KEGG" id="pae:PA0611"/>
<dbReference type="PATRIC" id="fig|208964.12.peg.647"/>
<dbReference type="PseudoCAP" id="PA0611"/>
<dbReference type="HOGENOM" id="CLU_066192_1_4_6"/>
<dbReference type="InParanoid" id="Q06553"/>
<dbReference type="OrthoDB" id="8613261at2"/>
<dbReference type="PhylomeDB" id="Q06553"/>
<dbReference type="BioCyc" id="PAER208964:G1FZ6-618-MONOMER"/>
<dbReference type="Proteomes" id="UP000002438">
    <property type="component" value="Chromosome"/>
</dbReference>
<dbReference type="GO" id="GO:0003677">
    <property type="term" value="F:DNA binding"/>
    <property type="evidence" value="ECO:0007669"/>
    <property type="project" value="UniProtKB-KW"/>
</dbReference>
<dbReference type="GO" id="GO:0030152">
    <property type="term" value="P:bacteriocin biosynthetic process"/>
    <property type="evidence" value="ECO:0007669"/>
    <property type="project" value="UniProtKB-KW"/>
</dbReference>
<dbReference type="GO" id="GO:1900377">
    <property type="term" value="P:negative regulation of secondary metabolite biosynthetic process"/>
    <property type="evidence" value="ECO:0000315"/>
    <property type="project" value="PseudoCAP"/>
</dbReference>
<dbReference type="CDD" id="cd00093">
    <property type="entry name" value="HTH_XRE"/>
    <property type="match status" value="1"/>
</dbReference>
<dbReference type="CDD" id="cd06529">
    <property type="entry name" value="S24_LexA-like"/>
    <property type="match status" value="1"/>
</dbReference>
<dbReference type="Gene3D" id="1.10.260.40">
    <property type="entry name" value="lambda repressor-like DNA-binding domains"/>
    <property type="match status" value="1"/>
</dbReference>
<dbReference type="Gene3D" id="2.10.109.10">
    <property type="entry name" value="Umud Fragment, subunit A"/>
    <property type="match status" value="1"/>
</dbReference>
<dbReference type="InterPro" id="IPR001387">
    <property type="entry name" value="Cro/C1-type_HTH"/>
</dbReference>
<dbReference type="InterPro" id="IPR010982">
    <property type="entry name" value="Lambda_DNA-bd_dom_sf"/>
</dbReference>
<dbReference type="InterPro" id="IPR039418">
    <property type="entry name" value="LexA-like"/>
</dbReference>
<dbReference type="InterPro" id="IPR036286">
    <property type="entry name" value="LexA/Signal_pep-like_sf"/>
</dbReference>
<dbReference type="InterPro" id="IPR015927">
    <property type="entry name" value="Peptidase_S24_S26A/B/C"/>
</dbReference>
<dbReference type="PANTHER" id="PTHR40661">
    <property type="match status" value="1"/>
</dbReference>
<dbReference type="PANTHER" id="PTHR40661:SF2">
    <property type="entry name" value="HTH-TYPE TRANSCRIPTIONAL REGULATOR PRTR"/>
    <property type="match status" value="1"/>
</dbReference>
<dbReference type="Pfam" id="PF01381">
    <property type="entry name" value="HTH_3"/>
    <property type="match status" value="1"/>
</dbReference>
<dbReference type="Pfam" id="PF00717">
    <property type="entry name" value="Peptidase_S24"/>
    <property type="match status" value="1"/>
</dbReference>
<dbReference type="SMART" id="SM00530">
    <property type="entry name" value="HTH_XRE"/>
    <property type="match status" value="1"/>
</dbReference>
<dbReference type="SUPFAM" id="SSF47413">
    <property type="entry name" value="lambda repressor-like DNA-binding domains"/>
    <property type="match status" value="1"/>
</dbReference>
<dbReference type="SUPFAM" id="SSF51306">
    <property type="entry name" value="LexA/Signal peptidase"/>
    <property type="match status" value="1"/>
</dbReference>
<dbReference type="PROSITE" id="PS50943">
    <property type="entry name" value="HTH_CROC1"/>
    <property type="match status" value="1"/>
</dbReference>
<keyword id="KW-0045">Antibiotic biosynthesis</keyword>
<keyword id="KW-0871">Bacteriocin biosynthesis</keyword>
<keyword id="KW-0238">DNA-binding</keyword>
<keyword id="KW-1185">Reference proteome</keyword>
<keyword id="KW-0678">Repressor</keyword>
<keyword id="KW-0804">Transcription</keyword>
<keyword id="KW-0805">Transcription regulation</keyword>
<sequence>MDKSTQIPPDSFAARLKQAMAMRNLKQETLAEAAGVSQNTIHKLTSGKAQSTRKLIEIAAALGVSPVWLQTGEGAPAARSAVSVADGSPLVLEPLHPWDSDTPLDEDEVELPLYKEVEMSAGAGRTAVREIEGRKLRFSYATLRASGVDPSAAICAQLTGNSMEPLIMDGSTIGVDTATTHITDGEIYALEHDGMLRVKFVYRLPGGGIRLRSFNREEYPDEEYSPEDMRSRQISMIGWVFWWSTVRHRRGPSLVR</sequence>
<name>PRTR_PSEAE</name>
<reference key="1">
    <citation type="journal article" date="1993" name="J. Bacteriol.">
        <title>Regulation of pyocin genes in Pseudomonas aeruginosa by positive (prtN) and negative (prtR) regulatory genes.</title>
        <authorList>
            <person name="Matsui H."/>
            <person name="Sano Y."/>
            <person name="Ishihara H."/>
            <person name="Shinomiya T."/>
        </authorList>
    </citation>
    <scope>NUCLEOTIDE SEQUENCE [GENOMIC DNA]</scope>
</reference>
<reference key="2">
    <citation type="submission" date="1999-08" db="EMBL/GenBank/DDBJ databases">
        <title>Genetic relationship between bacteriocins and bacteriophages.</title>
        <authorList>
            <person name="Nakayama K."/>
            <person name="Takashima K."/>
            <person name="Ishihara H."/>
            <person name="Shinomiya T."/>
            <person name="Kageyama M."/>
            <person name="Kanaya S."/>
            <person name="Ohnishi M."/>
            <person name="Murata T."/>
            <person name="Terawaki Y."/>
            <person name="Mori H."/>
            <person name="Hayashi T."/>
        </authorList>
    </citation>
    <scope>NUCLEOTIDE SEQUENCE [GENOMIC DNA]</scope>
    <source>
        <strain>ATCC 15692 / DSM 22644 / CIP 104116 / JCM 14847 / LMG 12228 / 1C / PRS 101 / PAO1</strain>
        <strain>PML14</strain>
    </source>
</reference>
<reference key="3">
    <citation type="journal article" date="2000" name="Nature">
        <title>Complete genome sequence of Pseudomonas aeruginosa PAO1, an opportunistic pathogen.</title>
        <authorList>
            <person name="Stover C.K."/>
            <person name="Pham X.-Q.T."/>
            <person name="Erwin A.L."/>
            <person name="Mizoguchi S.D."/>
            <person name="Warrener P."/>
            <person name="Hickey M.J."/>
            <person name="Brinkman F.S.L."/>
            <person name="Hufnagle W.O."/>
            <person name="Kowalik D.J."/>
            <person name="Lagrou M."/>
            <person name="Garber R.L."/>
            <person name="Goltry L."/>
            <person name="Tolentino E."/>
            <person name="Westbrock-Wadman S."/>
            <person name="Yuan Y."/>
            <person name="Brody L.L."/>
            <person name="Coulter S.N."/>
            <person name="Folger K.R."/>
            <person name="Kas A."/>
            <person name="Larbig K."/>
            <person name="Lim R.M."/>
            <person name="Smith K.A."/>
            <person name="Spencer D.H."/>
            <person name="Wong G.K.-S."/>
            <person name="Wu Z."/>
            <person name="Paulsen I.T."/>
            <person name="Reizer J."/>
            <person name="Saier M.H. Jr."/>
            <person name="Hancock R.E.W."/>
            <person name="Lory S."/>
            <person name="Olson M.V."/>
        </authorList>
    </citation>
    <scope>NUCLEOTIDE SEQUENCE [LARGE SCALE GENOMIC DNA]</scope>
    <source>
        <strain>ATCC 15692 / DSM 22644 / CIP 104116 / JCM 14847 / LMG 12228 / 1C / PRS 101 / PAO1</strain>
    </source>
</reference>
<organism>
    <name type="scientific">Pseudomonas aeruginosa (strain ATCC 15692 / DSM 22644 / CIP 104116 / JCM 14847 / LMG 12228 / 1C / PRS 101 / PAO1)</name>
    <dbReference type="NCBI Taxonomy" id="208964"/>
    <lineage>
        <taxon>Bacteria</taxon>
        <taxon>Pseudomonadati</taxon>
        <taxon>Pseudomonadota</taxon>
        <taxon>Gammaproteobacteria</taxon>
        <taxon>Pseudomonadales</taxon>
        <taxon>Pseudomonadaceae</taxon>
        <taxon>Pseudomonas</taxon>
    </lineage>
</organism>
<proteinExistence type="evidence at transcript level"/>
<comment type="function">
    <text>Represses the promoter activity of the prtN gene.</text>
</comment>
<comment type="induction">
    <text>Inactivated by the activated RecA protein after UV irradiation.</text>
</comment>
<gene>
    <name type="primary">prtR</name>
    <name type="ordered locus">PA0611</name>
</gene>